<protein>
    <recommendedName>
        <fullName evidence="1">L-cysteine:1D-myo-inositol 2-amino-2-deoxy-alpha-D-glucopyranoside ligase</fullName>
        <shortName evidence="1">L-Cys:GlcN-Ins ligase</shortName>
        <ecNumber evidence="1">6.3.1.13</ecNumber>
    </recommendedName>
    <alternativeName>
        <fullName evidence="1">Mycothiol ligase</fullName>
        <shortName evidence="1">MSH ligase</shortName>
    </alternativeName>
</protein>
<gene>
    <name evidence="1" type="primary">mshC</name>
    <name type="ordered locus">KRH_13920</name>
</gene>
<sequence length="438" mass="47101">MKSWSSRPVPELPGTGTAPRVHDTSTGQLEPLAARDGRASLYVCGITPYDATHMGHAATYVAFDLLHRLWRDAGWSVDYVQNVTDVDDPLLERADATGVDWRELAESQTELFRTDMSALNVLAPQHYVGATEVVDRIVPAVERLLERGLAYRAPAGTGQGGEPAPAGDVYFDVDAAGALRAEDPDAWVVGSTCRLAGERDRMMPLFADHGGDPDRTGKRDPMDPLLWRAHRAGEPSWDGASLGPGRPGWHIECSVIALDLLPRPFTVQGGGSDLAFPHHDMGAGHAYALSGQPMAEHYVHTAMVGLDGEKMSKSRGNLVLVSTLRAQGMDPAVIRLAILANHYRTDWFWTDELLEQARRRLGTWREAAAKQETAGADAMLEAVRAALGEDLNSPAALIAVDAWAARNLGGAAARGSGASSQDTRLARDTVEALLGVVL</sequence>
<reference key="1">
    <citation type="journal article" date="2008" name="J. Bacteriol.">
        <title>Complete genome sequence of the soil actinomycete Kocuria rhizophila.</title>
        <authorList>
            <person name="Takarada H."/>
            <person name="Sekine M."/>
            <person name="Kosugi H."/>
            <person name="Matsuo Y."/>
            <person name="Fujisawa T."/>
            <person name="Omata S."/>
            <person name="Kishi E."/>
            <person name="Shimizu A."/>
            <person name="Tsukatani N."/>
            <person name="Tanikawa S."/>
            <person name="Fujita N."/>
            <person name="Harayama S."/>
        </authorList>
    </citation>
    <scope>NUCLEOTIDE SEQUENCE [LARGE SCALE GENOMIC DNA]</scope>
    <source>
        <strain>ATCC 9341 / DSM 348 / NBRC 103217 / DC2201</strain>
    </source>
</reference>
<feature type="chain" id="PRO_0000400452" description="L-cysteine:1D-myo-inositol 2-amino-2-deoxy-alpha-D-glucopyranoside ligase">
    <location>
        <begin position="1"/>
        <end position="438"/>
    </location>
</feature>
<feature type="region of interest" description="Disordered" evidence="2">
    <location>
        <begin position="1"/>
        <end position="27"/>
    </location>
</feature>
<feature type="short sequence motif" description="'HIGH' region" evidence="1">
    <location>
        <begin position="46"/>
        <end position="56"/>
    </location>
</feature>
<feature type="short sequence motif" description="'ERGGDP' region" evidence="1">
    <location>
        <begin position="208"/>
        <end position="213"/>
    </location>
</feature>
<feature type="short sequence motif" description="'KMSKS' region" evidence="1">
    <location>
        <begin position="310"/>
        <end position="314"/>
    </location>
</feature>
<feature type="binding site" evidence="1">
    <location>
        <begin position="44"/>
        <end position="47"/>
    </location>
    <ligand>
        <name>L-cysteinyl-5'-AMP</name>
        <dbReference type="ChEBI" id="CHEBI:144924"/>
    </ligand>
</feature>
<feature type="binding site" evidence="1">
    <location>
        <position position="44"/>
    </location>
    <ligand>
        <name>Zn(2+)</name>
        <dbReference type="ChEBI" id="CHEBI:29105"/>
    </ligand>
</feature>
<feature type="binding site" evidence="1">
    <location>
        <position position="59"/>
    </location>
    <ligand>
        <name>L-cysteinyl-5'-AMP</name>
        <dbReference type="ChEBI" id="CHEBI:144924"/>
    </ligand>
</feature>
<feature type="binding site" evidence="1">
    <location>
        <begin position="82"/>
        <end position="84"/>
    </location>
    <ligand>
        <name>L-cysteinyl-5'-AMP</name>
        <dbReference type="ChEBI" id="CHEBI:144924"/>
    </ligand>
</feature>
<feature type="binding site" evidence="1">
    <location>
        <position position="249"/>
    </location>
    <ligand>
        <name>L-cysteinyl-5'-AMP</name>
        <dbReference type="ChEBI" id="CHEBI:144924"/>
    </ligand>
</feature>
<feature type="binding site" evidence="1">
    <location>
        <position position="253"/>
    </location>
    <ligand>
        <name>Zn(2+)</name>
        <dbReference type="ChEBI" id="CHEBI:29105"/>
    </ligand>
</feature>
<feature type="binding site" evidence="1">
    <location>
        <begin position="271"/>
        <end position="273"/>
    </location>
    <ligand>
        <name>L-cysteinyl-5'-AMP</name>
        <dbReference type="ChEBI" id="CHEBI:144924"/>
    </ligand>
</feature>
<feature type="binding site" evidence="1">
    <location>
        <position position="278"/>
    </location>
    <ligand>
        <name>Zn(2+)</name>
        <dbReference type="ChEBI" id="CHEBI:29105"/>
    </ligand>
</feature>
<feature type="binding site" evidence="1">
    <location>
        <position position="304"/>
    </location>
    <ligand>
        <name>L-cysteinyl-5'-AMP</name>
        <dbReference type="ChEBI" id="CHEBI:144924"/>
    </ligand>
</feature>
<name>MSHC_KOCRD</name>
<evidence type="ECO:0000255" key="1">
    <source>
        <dbReference type="HAMAP-Rule" id="MF_01697"/>
    </source>
</evidence>
<evidence type="ECO:0000256" key="2">
    <source>
        <dbReference type="SAM" id="MobiDB-lite"/>
    </source>
</evidence>
<comment type="function">
    <text evidence="1">Catalyzes the ATP-dependent condensation of GlcN-Ins and L-cysteine to form L-Cys-GlcN-Ins.</text>
</comment>
<comment type="catalytic activity">
    <reaction evidence="1">
        <text>1D-myo-inositol 2-amino-2-deoxy-alpha-D-glucopyranoside + L-cysteine + ATP = 1D-myo-inositol 2-(L-cysteinylamino)-2-deoxy-alpha-D-glucopyranoside + AMP + diphosphate + H(+)</text>
        <dbReference type="Rhea" id="RHEA:26176"/>
        <dbReference type="ChEBI" id="CHEBI:15378"/>
        <dbReference type="ChEBI" id="CHEBI:30616"/>
        <dbReference type="ChEBI" id="CHEBI:33019"/>
        <dbReference type="ChEBI" id="CHEBI:35235"/>
        <dbReference type="ChEBI" id="CHEBI:58886"/>
        <dbReference type="ChEBI" id="CHEBI:58887"/>
        <dbReference type="ChEBI" id="CHEBI:456215"/>
        <dbReference type="EC" id="6.3.1.13"/>
    </reaction>
</comment>
<comment type="cofactor">
    <cofactor evidence="1">
        <name>Zn(2+)</name>
        <dbReference type="ChEBI" id="CHEBI:29105"/>
    </cofactor>
    <text evidence="1">Binds 1 zinc ion per subunit.</text>
</comment>
<comment type="subunit">
    <text evidence="1">Monomer.</text>
</comment>
<comment type="similarity">
    <text evidence="1">Belongs to the class-I aminoacyl-tRNA synthetase family. MshC subfamily.</text>
</comment>
<accession>B2GIP6</accession>
<organism>
    <name type="scientific">Kocuria rhizophila (strain ATCC 9341 / DSM 348 / NBRC 103217 / DC2201)</name>
    <dbReference type="NCBI Taxonomy" id="378753"/>
    <lineage>
        <taxon>Bacteria</taxon>
        <taxon>Bacillati</taxon>
        <taxon>Actinomycetota</taxon>
        <taxon>Actinomycetes</taxon>
        <taxon>Micrococcales</taxon>
        <taxon>Micrococcaceae</taxon>
        <taxon>Kocuria</taxon>
    </lineage>
</organism>
<dbReference type="EC" id="6.3.1.13" evidence="1"/>
<dbReference type="EMBL" id="AP009152">
    <property type="protein sequence ID" value="BAG29739.1"/>
    <property type="molecule type" value="Genomic_DNA"/>
</dbReference>
<dbReference type="RefSeq" id="WP_012398460.1">
    <property type="nucleotide sequence ID" value="NC_010617.1"/>
</dbReference>
<dbReference type="SMR" id="B2GIP6"/>
<dbReference type="STRING" id="378753.KRH_13920"/>
<dbReference type="KEGG" id="krh:KRH_13920"/>
<dbReference type="eggNOG" id="COG0215">
    <property type="taxonomic scope" value="Bacteria"/>
</dbReference>
<dbReference type="HOGENOM" id="CLU_013528_0_0_11"/>
<dbReference type="OrthoDB" id="9815130at2"/>
<dbReference type="Proteomes" id="UP000008838">
    <property type="component" value="Chromosome"/>
</dbReference>
<dbReference type="GO" id="GO:0005829">
    <property type="term" value="C:cytosol"/>
    <property type="evidence" value="ECO:0007669"/>
    <property type="project" value="TreeGrafter"/>
</dbReference>
<dbReference type="GO" id="GO:0005524">
    <property type="term" value="F:ATP binding"/>
    <property type="evidence" value="ECO:0007669"/>
    <property type="project" value="UniProtKB-KW"/>
</dbReference>
<dbReference type="GO" id="GO:0035446">
    <property type="term" value="F:cysteine-glucosaminylinositol ligase activity"/>
    <property type="evidence" value="ECO:0007669"/>
    <property type="project" value="UniProtKB-UniRule"/>
</dbReference>
<dbReference type="GO" id="GO:0004817">
    <property type="term" value="F:cysteine-tRNA ligase activity"/>
    <property type="evidence" value="ECO:0007669"/>
    <property type="project" value="TreeGrafter"/>
</dbReference>
<dbReference type="GO" id="GO:0008270">
    <property type="term" value="F:zinc ion binding"/>
    <property type="evidence" value="ECO:0007669"/>
    <property type="project" value="UniProtKB-UniRule"/>
</dbReference>
<dbReference type="GO" id="GO:0006423">
    <property type="term" value="P:cysteinyl-tRNA aminoacylation"/>
    <property type="evidence" value="ECO:0007669"/>
    <property type="project" value="TreeGrafter"/>
</dbReference>
<dbReference type="GO" id="GO:0010125">
    <property type="term" value="P:mycothiol biosynthetic process"/>
    <property type="evidence" value="ECO:0007669"/>
    <property type="project" value="UniProtKB-UniRule"/>
</dbReference>
<dbReference type="Gene3D" id="1.20.120.640">
    <property type="entry name" value="Anticodon-binding domain of a subclass of class I aminoacyl-tRNA synthetases"/>
    <property type="match status" value="1"/>
</dbReference>
<dbReference type="Gene3D" id="3.40.50.620">
    <property type="entry name" value="HUPs"/>
    <property type="match status" value="1"/>
</dbReference>
<dbReference type="HAMAP" id="MF_01697">
    <property type="entry name" value="MshC"/>
    <property type="match status" value="1"/>
</dbReference>
<dbReference type="InterPro" id="IPR024909">
    <property type="entry name" value="Cys-tRNA/MSH_ligase"/>
</dbReference>
<dbReference type="InterPro" id="IPR017812">
    <property type="entry name" value="Mycothiol_ligase_MshC"/>
</dbReference>
<dbReference type="InterPro" id="IPR014729">
    <property type="entry name" value="Rossmann-like_a/b/a_fold"/>
</dbReference>
<dbReference type="InterPro" id="IPR032678">
    <property type="entry name" value="tRNA-synt_1_cat_dom"/>
</dbReference>
<dbReference type="NCBIfam" id="TIGR03447">
    <property type="entry name" value="mycothiol_MshC"/>
    <property type="match status" value="1"/>
</dbReference>
<dbReference type="PANTHER" id="PTHR10890:SF3">
    <property type="entry name" value="CYSTEINE--TRNA LIGASE, CYTOPLASMIC"/>
    <property type="match status" value="1"/>
</dbReference>
<dbReference type="PANTHER" id="PTHR10890">
    <property type="entry name" value="CYSTEINYL-TRNA SYNTHETASE"/>
    <property type="match status" value="1"/>
</dbReference>
<dbReference type="Pfam" id="PF01406">
    <property type="entry name" value="tRNA-synt_1e"/>
    <property type="match status" value="1"/>
</dbReference>
<dbReference type="PRINTS" id="PR00983">
    <property type="entry name" value="TRNASYNTHCYS"/>
</dbReference>
<dbReference type="SUPFAM" id="SSF52374">
    <property type="entry name" value="Nucleotidylyl transferase"/>
    <property type="match status" value="1"/>
</dbReference>
<keyword id="KW-0067">ATP-binding</keyword>
<keyword id="KW-0436">Ligase</keyword>
<keyword id="KW-0479">Metal-binding</keyword>
<keyword id="KW-0547">Nucleotide-binding</keyword>
<keyword id="KW-1185">Reference proteome</keyword>
<keyword id="KW-0862">Zinc</keyword>
<proteinExistence type="inferred from homology"/>